<evidence type="ECO:0000255" key="1">
    <source>
        <dbReference type="HAMAP-Rule" id="MF_01053"/>
    </source>
</evidence>
<name>YACL_ECO81</name>
<organism>
    <name type="scientific">Escherichia coli O81 (strain ED1a)</name>
    <dbReference type="NCBI Taxonomy" id="585397"/>
    <lineage>
        <taxon>Bacteria</taxon>
        <taxon>Pseudomonadati</taxon>
        <taxon>Pseudomonadota</taxon>
        <taxon>Gammaproteobacteria</taxon>
        <taxon>Enterobacterales</taxon>
        <taxon>Enterobacteriaceae</taxon>
        <taxon>Escherichia</taxon>
    </lineage>
</organism>
<dbReference type="EMBL" id="CU928162">
    <property type="protein sequence ID" value="CAR06346.1"/>
    <property type="molecule type" value="Genomic_DNA"/>
</dbReference>
<dbReference type="RefSeq" id="WP_000384304.1">
    <property type="nucleotide sequence ID" value="NC_011745.1"/>
</dbReference>
<dbReference type="KEGG" id="ecq:ECED1_0123"/>
<dbReference type="HOGENOM" id="CLU_139226_0_0_6"/>
<dbReference type="Proteomes" id="UP000000748">
    <property type="component" value="Chromosome"/>
</dbReference>
<dbReference type="HAMAP" id="MF_01053">
    <property type="entry name" value="UPF0231"/>
    <property type="match status" value="1"/>
</dbReference>
<dbReference type="InterPro" id="IPR008249">
    <property type="entry name" value="UPF0231"/>
</dbReference>
<dbReference type="NCBIfam" id="NF003574">
    <property type="entry name" value="PRK05248.1-1"/>
    <property type="match status" value="1"/>
</dbReference>
<dbReference type="NCBIfam" id="NF003576">
    <property type="entry name" value="PRK05248.1-3"/>
    <property type="match status" value="1"/>
</dbReference>
<dbReference type="Pfam" id="PF06062">
    <property type="entry name" value="UPF0231"/>
    <property type="match status" value="1"/>
</dbReference>
<dbReference type="PIRSF" id="PIRSF006287">
    <property type="entry name" value="UCP006287"/>
    <property type="match status" value="1"/>
</dbReference>
<proteinExistence type="inferred from homology"/>
<protein>
    <recommendedName>
        <fullName evidence="1">UPF0231 protein YacL</fullName>
    </recommendedName>
</protein>
<reference key="1">
    <citation type="journal article" date="2009" name="PLoS Genet.">
        <title>Organised genome dynamics in the Escherichia coli species results in highly diverse adaptive paths.</title>
        <authorList>
            <person name="Touchon M."/>
            <person name="Hoede C."/>
            <person name="Tenaillon O."/>
            <person name="Barbe V."/>
            <person name="Baeriswyl S."/>
            <person name="Bidet P."/>
            <person name="Bingen E."/>
            <person name="Bonacorsi S."/>
            <person name="Bouchier C."/>
            <person name="Bouvet O."/>
            <person name="Calteau A."/>
            <person name="Chiapello H."/>
            <person name="Clermont O."/>
            <person name="Cruveiller S."/>
            <person name="Danchin A."/>
            <person name="Diard M."/>
            <person name="Dossat C."/>
            <person name="Karoui M.E."/>
            <person name="Frapy E."/>
            <person name="Garry L."/>
            <person name="Ghigo J.M."/>
            <person name="Gilles A.M."/>
            <person name="Johnson J."/>
            <person name="Le Bouguenec C."/>
            <person name="Lescat M."/>
            <person name="Mangenot S."/>
            <person name="Martinez-Jehanne V."/>
            <person name="Matic I."/>
            <person name="Nassif X."/>
            <person name="Oztas S."/>
            <person name="Petit M.A."/>
            <person name="Pichon C."/>
            <person name="Rouy Z."/>
            <person name="Ruf C.S."/>
            <person name="Schneider D."/>
            <person name="Tourret J."/>
            <person name="Vacherie B."/>
            <person name="Vallenet D."/>
            <person name="Medigue C."/>
            <person name="Rocha E.P.C."/>
            <person name="Denamur E."/>
        </authorList>
    </citation>
    <scope>NUCLEOTIDE SEQUENCE [LARGE SCALE GENOMIC DNA]</scope>
    <source>
        <strain>ED1a</strain>
    </source>
</reference>
<feature type="chain" id="PRO_1000149632" description="UPF0231 protein YacL">
    <location>
        <begin position="1"/>
        <end position="120"/>
    </location>
</feature>
<comment type="similarity">
    <text evidence="1">Belongs to the UPF0231 family.</text>
</comment>
<accession>B7MNY1</accession>
<sequence>MDYEFLRDITGVVKVRMSMGHEVVGHWFNEEVKENLALLDEVEDAARTLKGSERSWQRAGHEYTLWMDGEEVMVRANQLEFAGDEMEEGMNYYDEESLSLCGVEDFLQVVAAYRNFVQQK</sequence>
<gene>
    <name evidence="1" type="primary">yacL</name>
    <name type="ordered locus">ECED1_0123</name>
</gene>